<feature type="chain" id="PRO_0000211610" description="Chromosome partition protein MukF">
    <location>
        <begin position="1"/>
        <end position="440"/>
    </location>
</feature>
<feature type="region of interest" description="Leucine-zipper">
    <location>
        <begin position="208"/>
        <end position="236"/>
    </location>
</feature>
<dbReference type="EMBL" id="AE006468">
    <property type="protein sequence ID" value="AAL19926.1"/>
    <property type="molecule type" value="Genomic_DNA"/>
</dbReference>
<dbReference type="RefSeq" id="NP_459967.1">
    <property type="nucleotide sequence ID" value="NC_003197.2"/>
</dbReference>
<dbReference type="RefSeq" id="WP_001288828.1">
    <property type="nucleotide sequence ID" value="NC_003197.2"/>
</dbReference>
<dbReference type="SMR" id="Q8ZQB7"/>
<dbReference type="STRING" id="99287.STM0992"/>
<dbReference type="PaxDb" id="99287-STM0992"/>
<dbReference type="GeneID" id="1252510"/>
<dbReference type="KEGG" id="stm:STM0992"/>
<dbReference type="PATRIC" id="fig|99287.12.peg.1045"/>
<dbReference type="HOGENOM" id="CLU_049853_0_0_6"/>
<dbReference type="OMA" id="TKDWQAA"/>
<dbReference type="PhylomeDB" id="Q8ZQB7"/>
<dbReference type="BioCyc" id="SENT99287:STM0992-MONOMER"/>
<dbReference type="Proteomes" id="UP000001014">
    <property type="component" value="Chromosome"/>
</dbReference>
<dbReference type="GO" id="GO:0005737">
    <property type="term" value="C:cytoplasm"/>
    <property type="evidence" value="ECO:0007669"/>
    <property type="project" value="UniProtKB-UniRule"/>
</dbReference>
<dbReference type="GO" id="GO:0009295">
    <property type="term" value="C:nucleoid"/>
    <property type="evidence" value="ECO:0007669"/>
    <property type="project" value="UniProtKB-SubCell"/>
</dbReference>
<dbReference type="GO" id="GO:0005509">
    <property type="term" value="F:calcium ion binding"/>
    <property type="evidence" value="ECO:0007669"/>
    <property type="project" value="UniProtKB-UniRule"/>
</dbReference>
<dbReference type="GO" id="GO:0051301">
    <property type="term" value="P:cell division"/>
    <property type="evidence" value="ECO:0007669"/>
    <property type="project" value="UniProtKB-KW"/>
</dbReference>
<dbReference type="GO" id="GO:0030261">
    <property type="term" value="P:chromosome condensation"/>
    <property type="evidence" value="ECO:0007669"/>
    <property type="project" value="UniProtKB-KW"/>
</dbReference>
<dbReference type="GO" id="GO:0007059">
    <property type="term" value="P:chromosome segregation"/>
    <property type="evidence" value="ECO:0007669"/>
    <property type="project" value="UniProtKB-UniRule"/>
</dbReference>
<dbReference type="GO" id="GO:0006260">
    <property type="term" value="P:DNA replication"/>
    <property type="evidence" value="ECO:0007669"/>
    <property type="project" value="UniProtKB-UniRule"/>
</dbReference>
<dbReference type="CDD" id="cd16337">
    <property type="entry name" value="MukF_C"/>
    <property type="match status" value="1"/>
</dbReference>
<dbReference type="CDD" id="cd16335">
    <property type="entry name" value="MukF_N"/>
    <property type="match status" value="1"/>
</dbReference>
<dbReference type="Gene3D" id="1.20.58.590">
    <property type="entry name" value="Chromosome partition protein MukF, middle domain"/>
    <property type="match status" value="1"/>
</dbReference>
<dbReference type="Gene3D" id="1.10.225.40">
    <property type="entry name" value="MukF, C-terminal domain"/>
    <property type="match status" value="1"/>
</dbReference>
<dbReference type="Gene3D" id="1.10.10.10">
    <property type="entry name" value="Winged helix-like DNA-binding domain superfamily/Winged helix DNA-binding domain"/>
    <property type="match status" value="1"/>
</dbReference>
<dbReference type="HAMAP" id="MF_01803">
    <property type="entry name" value="MukF"/>
    <property type="match status" value="1"/>
</dbReference>
<dbReference type="InterPro" id="IPR005582">
    <property type="entry name" value="Chromosome_partition_MukF"/>
</dbReference>
<dbReference type="InterPro" id="IPR033441">
    <property type="entry name" value="MukF_C"/>
</dbReference>
<dbReference type="InterPro" id="IPR038198">
    <property type="entry name" value="MukF_C_sf"/>
</dbReference>
<dbReference type="InterPro" id="IPR033440">
    <property type="entry name" value="MukF_M"/>
</dbReference>
<dbReference type="InterPro" id="IPR036141">
    <property type="entry name" value="MukF_M_sp"/>
</dbReference>
<dbReference type="InterPro" id="IPR033439">
    <property type="entry name" value="MukF_WHTH"/>
</dbReference>
<dbReference type="InterPro" id="IPR036388">
    <property type="entry name" value="WH-like_DNA-bd_sf"/>
</dbReference>
<dbReference type="InterPro" id="IPR036390">
    <property type="entry name" value="WH_DNA-bd_sf"/>
</dbReference>
<dbReference type="NCBIfam" id="NF003615">
    <property type="entry name" value="PRK05260.1"/>
    <property type="match status" value="1"/>
</dbReference>
<dbReference type="Pfam" id="PF03882">
    <property type="entry name" value="KicB"/>
    <property type="match status" value="1"/>
</dbReference>
<dbReference type="Pfam" id="PF17193">
    <property type="entry name" value="MukF_C"/>
    <property type="match status" value="1"/>
</dbReference>
<dbReference type="Pfam" id="PF17192">
    <property type="entry name" value="MukF_M"/>
    <property type="match status" value="1"/>
</dbReference>
<dbReference type="PIRSF" id="PIRSF018282">
    <property type="entry name" value="MukF"/>
    <property type="match status" value="1"/>
</dbReference>
<dbReference type="SUPFAM" id="SSF140570">
    <property type="entry name" value="MukF C-terminal domain-like"/>
    <property type="match status" value="1"/>
</dbReference>
<dbReference type="SUPFAM" id="SSF46785">
    <property type="entry name" value="Winged helix' DNA-binding domain"/>
    <property type="match status" value="1"/>
</dbReference>
<reference key="1">
    <citation type="journal article" date="2001" name="Nature">
        <title>Complete genome sequence of Salmonella enterica serovar Typhimurium LT2.</title>
        <authorList>
            <person name="McClelland M."/>
            <person name="Sanderson K.E."/>
            <person name="Spieth J."/>
            <person name="Clifton S.W."/>
            <person name="Latreille P."/>
            <person name="Courtney L."/>
            <person name="Porwollik S."/>
            <person name="Ali J."/>
            <person name="Dante M."/>
            <person name="Du F."/>
            <person name="Hou S."/>
            <person name="Layman D."/>
            <person name="Leonard S."/>
            <person name="Nguyen C."/>
            <person name="Scott K."/>
            <person name="Holmes A."/>
            <person name="Grewal N."/>
            <person name="Mulvaney E."/>
            <person name="Ryan E."/>
            <person name="Sun H."/>
            <person name="Florea L."/>
            <person name="Miller W."/>
            <person name="Stoneking T."/>
            <person name="Nhan M."/>
            <person name="Waterston R."/>
            <person name="Wilson R.K."/>
        </authorList>
    </citation>
    <scope>NUCLEOTIDE SEQUENCE [LARGE SCALE GENOMIC DNA]</scope>
    <source>
        <strain>LT2 / SGSC1412 / ATCC 700720</strain>
    </source>
</reference>
<sequence>MSEFSQTVPELVAWARKNDFSISLPVDRLSFLLAVATLNGERLDGEMSEGELVDAFRHVSDAFEQTSETIGVRANNAINDMVRQRLLNRFTSEQAEGNAIYRLTPLGIGITDYYIRQREFSTLRLSMQLSIVAGELKRAADAAAEGGDEFHWHRNVYAPLKYSVAEIFDSIDLTQRIMDEQQQQVKDDIAQLLNKDWRAAISSCELLLSETSGTLRELQDTLEAAGDKLQANLLRIQDATMTHDDLHFVDRLVFDLQSKLDRIISWGQQSIDLWIGYDRHVHKFIRTAIDMDKNRVFAQRLRQSVQTYFDDPWALTYANADRLLDMRDEEMALRDDEVTGELPPDLEYEEFNEIREQLAAIIEEQLAIYKTRQTPLDLGLVVREYLAQYPRARHFDVARIVIDQAVRLGVAQADFTGLPAKWQPINDYGAKVQAHVIDKY</sequence>
<accession>Q8ZQB7</accession>
<comment type="function">
    <text evidence="1">Involved in chromosome condensation, segregation and cell cycle progression. May participate in facilitating chromosome segregation by condensation DNA from both sides of a centrally located replisome during cell division. Not required for mini-F plasmid partitioning. Probably acts via its interaction with MukB and MukE. Overexpression results in anucleate cells. It has a calcium binding activity.</text>
</comment>
<comment type="subunit">
    <text evidence="1">Interacts, and probably forms a ternary complex, with MukE and MukB via its C-terminal region. The complex formation is stimulated by calcium or magnesium. It is required for an interaction between MukE and MukB.</text>
</comment>
<comment type="subcellular location">
    <subcellularLocation>
        <location evidence="1">Cytoplasm</location>
        <location evidence="1">Nucleoid</location>
    </subcellularLocation>
    <text evidence="1">Restricted to the nucleoid region.</text>
</comment>
<comment type="similarity">
    <text evidence="1">Belongs to the MukF family.</text>
</comment>
<organism>
    <name type="scientific">Salmonella typhimurium (strain LT2 / SGSC1412 / ATCC 700720)</name>
    <dbReference type="NCBI Taxonomy" id="99287"/>
    <lineage>
        <taxon>Bacteria</taxon>
        <taxon>Pseudomonadati</taxon>
        <taxon>Pseudomonadota</taxon>
        <taxon>Gammaproteobacteria</taxon>
        <taxon>Enterobacterales</taxon>
        <taxon>Enterobacteriaceae</taxon>
        <taxon>Salmonella</taxon>
    </lineage>
</organism>
<proteinExistence type="inferred from homology"/>
<evidence type="ECO:0000255" key="1">
    <source>
        <dbReference type="HAMAP-Rule" id="MF_01803"/>
    </source>
</evidence>
<protein>
    <recommendedName>
        <fullName evidence="1">Chromosome partition protein MukF</fullName>
    </recommendedName>
</protein>
<keyword id="KW-0106">Calcium</keyword>
<keyword id="KW-0131">Cell cycle</keyword>
<keyword id="KW-0132">Cell division</keyword>
<keyword id="KW-0159">Chromosome partition</keyword>
<keyword id="KW-0963">Cytoplasm</keyword>
<keyword id="KW-0226">DNA condensation</keyword>
<keyword id="KW-1185">Reference proteome</keyword>
<name>MUKF_SALTY</name>
<gene>
    <name evidence="1" type="primary">mukF</name>
    <name type="ordered locus">STM0992</name>
</gene>